<dbReference type="EC" id="2.5.1.6" evidence="1"/>
<dbReference type="EMBL" id="CP000302">
    <property type="protein sequence ID" value="ABE54370.1"/>
    <property type="molecule type" value="Genomic_DNA"/>
</dbReference>
<dbReference type="RefSeq" id="WP_011495532.1">
    <property type="nucleotide sequence ID" value="NC_007954.1"/>
</dbReference>
<dbReference type="SMR" id="Q12QA6"/>
<dbReference type="STRING" id="318161.Sden_1082"/>
<dbReference type="KEGG" id="sdn:Sden_1082"/>
<dbReference type="eggNOG" id="COG0192">
    <property type="taxonomic scope" value="Bacteria"/>
</dbReference>
<dbReference type="HOGENOM" id="CLU_041802_1_1_6"/>
<dbReference type="OrthoDB" id="9801686at2"/>
<dbReference type="UniPathway" id="UPA00315">
    <property type="reaction ID" value="UER00080"/>
</dbReference>
<dbReference type="Proteomes" id="UP000001982">
    <property type="component" value="Chromosome"/>
</dbReference>
<dbReference type="GO" id="GO:0005737">
    <property type="term" value="C:cytoplasm"/>
    <property type="evidence" value="ECO:0007669"/>
    <property type="project" value="UniProtKB-SubCell"/>
</dbReference>
<dbReference type="GO" id="GO:0005524">
    <property type="term" value="F:ATP binding"/>
    <property type="evidence" value="ECO:0007669"/>
    <property type="project" value="UniProtKB-UniRule"/>
</dbReference>
<dbReference type="GO" id="GO:0000287">
    <property type="term" value="F:magnesium ion binding"/>
    <property type="evidence" value="ECO:0007669"/>
    <property type="project" value="UniProtKB-UniRule"/>
</dbReference>
<dbReference type="GO" id="GO:0004478">
    <property type="term" value="F:methionine adenosyltransferase activity"/>
    <property type="evidence" value="ECO:0007669"/>
    <property type="project" value="UniProtKB-UniRule"/>
</dbReference>
<dbReference type="GO" id="GO:0006730">
    <property type="term" value="P:one-carbon metabolic process"/>
    <property type="evidence" value="ECO:0007669"/>
    <property type="project" value="UniProtKB-KW"/>
</dbReference>
<dbReference type="GO" id="GO:0006556">
    <property type="term" value="P:S-adenosylmethionine biosynthetic process"/>
    <property type="evidence" value="ECO:0007669"/>
    <property type="project" value="UniProtKB-UniRule"/>
</dbReference>
<dbReference type="CDD" id="cd18079">
    <property type="entry name" value="S-AdoMet_synt"/>
    <property type="match status" value="1"/>
</dbReference>
<dbReference type="FunFam" id="3.30.300.10:FF:000001">
    <property type="entry name" value="S-adenosylmethionine synthase"/>
    <property type="match status" value="1"/>
</dbReference>
<dbReference type="FunFam" id="3.30.300.10:FF:000003">
    <property type="entry name" value="S-adenosylmethionine synthase"/>
    <property type="match status" value="1"/>
</dbReference>
<dbReference type="FunFam" id="3.30.300.10:FF:000004">
    <property type="entry name" value="S-adenosylmethionine synthase"/>
    <property type="match status" value="1"/>
</dbReference>
<dbReference type="Gene3D" id="3.30.300.10">
    <property type="match status" value="3"/>
</dbReference>
<dbReference type="HAMAP" id="MF_00086">
    <property type="entry name" value="S_AdoMet_synth1"/>
    <property type="match status" value="1"/>
</dbReference>
<dbReference type="InterPro" id="IPR022631">
    <property type="entry name" value="ADOMET_SYNTHASE_CS"/>
</dbReference>
<dbReference type="InterPro" id="IPR022630">
    <property type="entry name" value="S-AdoMet_synt_C"/>
</dbReference>
<dbReference type="InterPro" id="IPR022629">
    <property type="entry name" value="S-AdoMet_synt_central"/>
</dbReference>
<dbReference type="InterPro" id="IPR022628">
    <property type="entry name" value="S-AdoMet_synt_N"/>
</dbReference>
<dbReference type="InterPro" id="IPR002133">
    <property type="entry name" value="S-AdoMet_synthetase"/>
</dbReference>
<dbReference type="InterPro" id="IPR022636">
    <property type="entry name" value="S-AdoMet_synthetase_sfam"/>
</dbReference>
<dbReference type="NCBIfam" id="TIGR01034">
    <property type="entry name" value="metK"/>
    <property type="match status" value="1"/>
</dbReference>
<dbReference type="PANTHER" id="PTHR11964">
    <property type="entry name" value="S-ADENOSYLMETHIONINE SYNTHETASE"/>
    <property type="match status" value="1"/>
</dbReference>
<dbReference type="Pfam" id="PF02773">
    <property type="entry name" value="S-AdoMet_synt_C"/>
    <property type="match status" value="1"/>
</dbReference>
<dbReference type="Pfam" id="PF02772">
    <property type="entry name" value="S-AdoMet_synt_M"/>
    <property type="match status" value="1"/>
</dbReference>
<dbReference type="Pfam" id="PF00438">
    <property type="entry name" value="S-AdoMet_synt_N"/>
    <property type="match status" value="1"/>
</dbReference>
<dbReference type="PIRSF" id="PIRSF000497">
    <property type="entry name" value="MAT"/>
    <property type="match status" value="1"/>
</dbReference>
<dbReference type="SUPFAM" id="SSF55973">
    <property type="entry name" value="S-adenosylmethionine synthetase"/>
    <property type="match status" value="3"/>
</dbReference>
<dbReference type="PROSITE" id="PS00376">
    <property type="entry name" value="ADOMET_SYNTHASE_1"/>
    <property type="match status" value="1"/>
</dbReference>
<dbReference type="PROSITE" id="PS00377">
    <property type="entry name" value="ADOMET_SYNTHASE_2"/>
    <property type="match status" value="1"/>
</dbReference>
<organism>
    <name type="scientific">Shewanella denitrificans (strain OS217 / ATCC BAA-1090 / DSM 15013)</name>
    <dbReference type="NCBI Taxonomy" id="318161"/>
    <lineage>
        <taxon>Bacteria</taxon>
        <taxon>Pseudomonadati</taxon>
        <taxon>Pseudomonadota</taxon>
        <taxon>Gammaproteobacteria</taxon>
        <taxon>Alteromonadales</taxon>
        <taxon>Shewanellaceae</taxon>
        <taxon>Shewanella</taxon>
    </lineage>
</organism>
<name>METK_SHEDO</name>
<gene>
    <name evidence="1" type="primary">metK</name>
    <name type="ordered locus">Sden_1082</name>
</gene>
<proteinExistence type="inferred from homology"/>
<protein>
    <recommendedName>
        <fullName evidence="1">S-adenosylmethionine synthase</fullName>
        <shortName evidence="1">AdoMet synthase</shortName>
        <ecNumber evidence="1">2.5.1.6</ecNumber>
    </recommendedName>
    <alternativeName>
        <fullName evidence="1">MAT</fullName>
    </alternativeName>
    <alternativeName>
        <fullName evidence="1">Methionine adenosyltransferase</fullName>
    </alternativeName>
</protein>
<keyword id="KW-0067">ATP-binding</keyword>
<keyword id="KW-0963">Cytoplasm</keyword>
<keyword id="KW-0460">Magnesium</keyword>
<keyword id="KW-0479">Metal-binding</keyword>
<keyword id="KW-0547">Nucleotide-binding</keyword>
<keyword id="KW-0554">One-carbon metabolism</keyword>
<keyword id="KW-0630">Potassium</keyword>
<keyword id="KW-1185">Reference proteome</keyword>
<keyword id="KW-0808">Transferase</keyword>
<comment type="function">
    <text evidence="1">Catalyzes the formation of S-adenosylmethionine (AdoMet) from methionine and ATP. The overall synthetic reaction is composed of two sequential steps, AdoMet formation and the subsequent tripolyphosphate hydrolysis which occurs prior to release of AdoMet from the enzyme.</text>
</comment>
<comment type="catalytic activity">
    <reaction evidence="1">
        <text>L-methionine + ATP + H2O = S-adenosyl-L-methionine + phosphate + diphosphate</text>
        <dbReference type="Rhea" id="RHEA:21080"/>
        <dbReference type="ChEBI" id="CHEBI:15377"/>
        <dbReference type="ChEBI" id="CHEBI:30616"/>
        <dbReference type="ChEBI" id="CHEBI:33019"/>
        <dbReference type="ChEBI" id="CHEBI:43474"/>
        <dbReference type="ChEBI" id="CHEBI:57844"/>
        <dbReference type="ChEBI" id="CHEBI:59789"/>
        <dbReference type="EC" id="2.5.1.6"/>
    </reaction>
</comment>
<comment type="cofactor">
    <cofactor evidence="1">
        <name>Mg(2+)</name>
        <dbReference type="ChEBI" id="CHEBI:18420"/>
    </cofactor>
    <text evidence="1">Binds 2 divalent ions per subunit.</text>
</comment>
<comment type="cofactor">
    <cofactor evidence="1">
        <name>K(+)</name>
        <dbReference type="ChEBI" id="CHEBI:29103"/>
    </cofactor>
    <text evidence="1">Binds 1 potassium ion per subunit.</text>
</comment>
<comment type="pathway">
    <text evidence="1">Amino-acid biosynthesis; S-adenosyl-L-methionine biosynthesis; S-adenosyl-L-methionine from L-methionine: step 1/1.</text>
</comment>
<comment type="subunit">
    <text evidence="1">Homotetramer; dimer of dimers.</text>
</comment>
<comment type="subcellular location">
    <subcellularLocation>
        <location evidence="1">Cytoplasm</location>
    </subcellularLocation>
</comment>
<comment type="similarity">
    <text evidence="1">Belongs to the AdoMet synthase family.</text>
</comment>
<reference key="1">
    <citation type="submission" date="2006-03" db="EMBL/GenBank/DDBJ databases">
        <title>Complete sequence of Shewanella denitrificans OS217.</title>
        <authorList>
            <consortium name="US DOE Joint Genome Institute"/>
            <person name="Copeland A."/>
            <person name="Lucas S."/>
            <person name="Lapidus A."/>
            <person name="Barry K."/>
            <person name="Detter J.C."/>
            <person name="Glavina del Rio T."/>
            <person name="Hammon N."/>
            <person name="Israni S."/>
            <person name="Dalin E."/>
            <person name="Tice H."/>
            <person name="Pitluck S."/>
            <person name="Brettin T."/>
            <person name="Bruce D."/>
            <person name="Han C."/>
            <person name="Tapia R."/>
            <person name="Gilna P."/>
            <person name="Kiss H."/>
            <person name="Schmutz J."/>
            <person name="Larimer F."/>
            <person name="Land M."/>
            <person name="Hauser L."/>
            <person name="Kyrpides N."/>
            <person name="Lykidis A."/>
            <person name="Richardson P."/>
        </authorList>
    </citation>
    <scope>NUCLEOTIDE SEQUENCE [LARGE SCALE GENOMIC DNA]</scope>
    <source>
        <strain>OS217 / ATCC BAA-1090 / DSM 15013</strain>
    </source>
</reference>
<sequence length="383" mass="41455">MAKHLFTSESVSEGHPDKIADQISDAVLDAILEQDPKARVACETYVKTGMVLVGGEVTTSAWVDIEEITRKTVREIGYTHSDMGFDADSCAVLNAIGKQSPDINQGVDRADPAEQGAGDQGLMFGYANNETDVLMPAPITYAHALVKRQSEVRKDGTLPWLRPDAKSQVTFAYEDGKIVGIDAIVLSTQHREDVTQADLIEGVMETIIKPVLPAQWLNKDTKYFINPTGRFVIGGPVGDCGLTGRKIIVDTYGGMARHGGGAFSGKDPSKVDRSAAYAARYVAKNIVAAGLADRCEIQVSYAIGVAEPTSISIETFGTGKVSEEVLIKLVRQHFELRPYGLTAMLDLARPIYQQTAAYGHFGREGFPWEATDKAEMLRADAGL</sequence>
<feature type="chain" id="PRO_0000302975" description="S-adenosylmethionine synthase">
    <location>
        <begin position="1"/>
        <end position="383"/>
    </location>
</feature>
<feature type="region of interest" description="Flexible loop" evidence="1">
    <location>
        <begin position="99"/>
        <end position="109"/>
    </location>
</feature>
<feature type="binding site" description="in other chain" evidence="1">
    <location>
        <position position="15"/>
    </location>
    <ligand>
        <name>ATP</name>
        <dbReference type="ChEBI" id="CHEBI:30616"/>
        <note>ligand shared between two neighboring subunits</note>
    </ligand>
</feature>
<feature type="binding site" evidence="1">
    <location>
        <position position="17"/>
    </location>
    <ligand>
        <name>Mg(2+)</name>
        <dbReference type="ChEBI" id="CHEBI:18420"/>
    </ligand>
</feature>
<feature type="binding site" evidence="1">
    <location>
        <position position="43"/>
    </location>
    <ligand>
        <name>K(+)</name>
        <dbReference type="ChEBI" id="CHEBI:29103"/>
    </ligand>
</feature>
<feature type="binding site" description="in other chain" evidence="1">
    <location>
        <position position="56"/>
    </location>
    <ligand>
        <name>L-methionine</name>
        <dbReference type="ChEBI" id="CHEBI:57844"/>
        <note>ligand shared between two neighboring subunits</note>
    </ligand>
</feature>
<feature type="binding site" description="in other chain" evidence="1">
    <location>
        <position position="99"/>
    </location>
    <ligand>
        <name>L-methionine</name>
        <dbReference type="ChEBI" id="CHEBI:57844"/>
        <note>ligand shared between two neighboring subunits</note>
    </ligand>
</feature>
<feature type="binding site" description="in other chain" evidence="1">
    <location>
        <begin position="164"/>
        <end position="166"/>
    </location>
    <ligand>
        <name>ATP</name>
        <dbReference type="ChEBI" id="CHEBI:30616"/>
        <note>ligand shared between two neighboring subunits</note>
    </ligand>
</feature>
<feature type="binding site" description="in other chain" evidence="1">
    <location>
        <begin position="230"/>
        <end position="231"/>
    </location>
    <ligand>
        <name>ATP</name>
        <dbReference type="ChEBI" id="CHEBI:30616"/>
        <note>ligand shared between two neighboring subunits</note>
    </ligand>
</feature>
<feature type="binding site" evidence="1">
    <location>
        <position position="239"/>
    </location>
    <ligand>
        <name>ATP</name>
        <dbReference type="ChEBI" id="CHEBI:30616"/>
        <note>ligand shared between two neighboring subunits</note>
    </ligand>
</feature>
<feature type="binding site" evidence="1">
    <location>
        <position position="239"/>
    </location>
    <ligand>
        <name>L-methionine</name>
        <dbReference type="ChEBI" id="CHEBI:57844"/>
        <note>ligand shared between two neighboring subunits</note>
    </ligand>
</feature>
<feature type="binding site" description="in other chain" evidence="1">
    <location>
        <begin position="245"/>
        <end position="246"/>
    </location>
    <ligand>
        <name>ATP</name>
        <dbReference type="ChEBI" id="CHEBI:30616"/>
        <note>ligand shared between two neighboring subunits</note>
    </ligand>
</feature>
<feature type="binding site" evidence="1">
    <location>
        <position position="262"/>
    </location>
    <ligand>
        <name>ATP</name>
        <dbReference type="ChEBI" id="CHEBI:30616"/>
        <note>ligand shared between two neighboring subunits</note>
    </ligand>
</feature>
<feature type="binding site" evidence="1">
    <location>
        <position position="266"/>
    </location>
    <ligand>
        <name>ATP</name>
        <dbReference type="ChEBI" id="CHEBI:30616"/>
        <note>ligand shared between two neighboring subunits</note>
    </ligand>
</feature>
<feature type="binding site" description="in other chain" evidence="1">
    <location>
        <position position="270"/>
    </location>
    <ligand>
        <name>L-methionine</name>
        <dbReference type="ChEBI" id="CHEBI:57844"/>
        <note>ligand shared between two neighboring subunits</note>
    </ligand>
</feature>
<accession>Q12QA6</accession>
<evidence type="ECO:0000255" key="1">
    <source>
        <dbReference type="HAMAP-Rule" id="MF_00086"/>
    </source>
</evidence>